<evidence type="ECO:0000250" key="1">
    <source>
        <dbReference type="UniProtKB" id="P00423"/>
    </source>
</evidence>
<evidence type="ECO:0000250" key="2">
    <source>
        <dbReference type="UniProtKB" id="P00424"/>
    </source>
</evidence>
<evidence type="ECO:0000250" key="3">
    <source>
        <dbReference type="UniProtKB" id="P10888"/>
    </source>
</evidence>
<evidence type="ECO:0000250" key="4">
    <source>
        <dbReference type="UniProtKB" id="P13073"/>
    </source>
</evidence>
<evidence type="ECO:0000250" key="5">
    <source>
        <dbReference type="UniProtKB" id="P19783"/>
    </source>
</evidence>
<evidence type="ECO:0000305" key="6"/>
<organism>
    <name type="scientific">Mandrillus sphinx</name>
    <name type="common">Mandrill</name>
    <name type="synonym">Papio sphinx</name>
    <dbReference type="NCBI Taxonomy" id="9561"/>
    <lineage>
        <taxon>Eukaryota</taxon>
        <taxon>Metazoa</taxon>
        <taxon>Chordata</taxon>
        <taxon>Craniata</taxon>
        <taxon>Vertebrata</taxon>
        <taxon>Euteleostomi</taxon>
        <taxon>Mammalia</taxon>
        <taxon>Eutheria</taxon>
        <taxon>Euarchontoglires</taxon>
        <taxon>Primates</taxon>
        <taxon>Haplorrhini</taxon>
        <taxon>Catarrhini</taxon>
        <taxon>Cercopithecidae</taxon>
        <taxon>Cercopithecinae</taxon>
        <taxon>Mandrillus</taxon>
    </lineage>
</organism>
<gene>
    <name type="primary">COX4I1</name>
    <name type="synonym">COX4</name>
</gene>
<comment type="function">
    <text evidence="2">Component of the cytochrome c oxidase, the last enzyme in the mitochondrial electron transport chain which drives oxidative phosphorylation. The respiratory chain contains 3 multisubunit complexes succinate dehydrogenase (complex II, CII), ubiquinol-cytochrome c oxidoreductase (cytochrome b-c1 complex, complex III, CIII) and cytochrome c oxidase (complex IV, CIV), that cooperate to transfer electrons derived from NADH and succinate to molecular oxygen, creating an electrochemical gradient over the inner membrane that drives transmembrane transport and the ATP synthase. Cytochrome c oxidase is the component of the respiratory chain that catalyzes the reduction of oxygen to water. Electrons originating from reduced cytochrome c in the intermembrane space (IMS) are transferred via the dinuclear copper A center (CU(A)) of subunit 2 and heme A of subunit 1 to the active site in subunit 1, a binuclear center (BNC) formed by heme A3 and copper B (CU(B)). The BNC reduces molecular oxygen to 2 water molecules using 4 electrons from cytochrome c in the IMS and 4 protons from the mitochondrial matrix.</text>
</comment>
<comment type="pathway">
    <text evidence="2">Energy metabolism; oxidative phosphorylation.</text>
</comment>
<comment type="subunit">
    <text evidence="1 3 4 5">Component of the cytochrome c oxidase (complex IV, CIV), a multisubunit enzyme composed of 14 subunits. The complex is composed of a catalytic core of 3 subunits MT-CO1, MT-CO2 and MT-CO3, encoded in the mitochondrial DNA, and 11 supernumerary subunits COX4I, COX5A, COX5B, COX6A, COX6B, COX6C, COX7A, COX7B, COX7C, COX8 and NDUFA4, which are encoded in the nuclear genome. The complex exists as a monomer or a dimer and forms supercomplexes (SCs) in the inner mitochondrial membrane with NADH-ubiquinone oxidoreductase (complex I, CI) and ubiquinol-cytochrome c oxidoreductase (cytochrome b-c1 complex, complex III, CIII), resulting in different assemblies (supercomplex SCI(1)III(2)IV(1) and megacomplex MCI(2)III(2)IV(2)) (By similarity). Interacts with PHB2; the interaction decreases in absence of SPHK2 (By similarity). Interacts with AFG1L (By similarity). Interacts with ABCB7; this interaction allows the regulation of cellular iron homeostasis and cellular reactive oxygen species (ROS) levels in cardiomyocytes (By similarity). Interacts with FLVCR2; this interaction occurs in the absence of heme and is disrupted upon heme binding. Interacts with IRGC (By similarity).</text>
</comment>
<comment type="subcellular location">
    <subcellularLocation>
        <location evidence="1">Mitochondrion inner membrane</location>
        <topology evidence="1">Single-pass membrane protein</topology>
    </subcellularLocation>
</comment>
<comment type="similarity">
    <text evidence="6">Belongs to the cytochrome c oxidase IV family.</text>
</comment>
<sequence length="99" mass="11548">SVVKSEDFTLPAYVDRRDYPLPDVAHVKHLSASQKALKEKEKASWSSLSMDEKVELYRIKFKESFAEMNRRSNEWKTVVGTAMFFIGITALVIMWEKLY</sequence>
<dbReference type="EMBL" id="AH005834">
    <property type="protein sequence ID" value="AAB97756.1"/>
    <property type="molecule type" value="Genomic_DNA"/>
</dbReference>
<dbReference type="SMR" id="O46587"/>
<dbReference type="UniPathway" id="UPA00705"/>
<dbReference type="GO" id="GO:0005743">
    <property type="term" value="C:mitochondrial inner membrane"/>
    <property type="evidence" value="ECO:0000250"/>
    <property type="project" value="UniProtKB"/>
</dbReference>
<dbReference type="GO" id="GO:0045277">
    <property type="term" value="C:respiratory chain complex IV"/>
    <property type="evidence" value="ECO:0007669"/>
    <property type="project" value="InterPro"/>
</dbReference>
<dbReference type="GO" id="GO:0006123">
    <property type="term" value="P:mitochondrial electron transport, cytochrome c to oxygen"/>
    <property type="evidence" value="ECO:0007669"/>
    <property type="project" value="InterPro"/>
</dbReference>
<dbReference type="CDD" id="cd00922">
    <property type="entry name" value="Cyt_c_Oxidase_IV"/>
    <property type="match status" value="1"/>
</dbReference>
<dbReference type="FunFam" id="1.10.442.10:FF:000001">
    <property type="entry name" value="Cytochrome c oxidase subunit 4 isoform 1"/>
    <property type="match status" value="1"/>
</dbReference>
<dbReference type="Gene3D" id="1.10.442.10">
    <property type="entry name" value="Cytochrome c oxidase subunit IV"/>
    <property type="match status" value="1"/>
</dbReference>
<dbReference type="InterPro" id="IPR013288">
    <property type="entry name" value="Cyt_c_oxidase_su4"/>
</dbReference>
<dbReference type="InterPro" id="IPR004203">
    <property type="entry name" value="Cyt_c_oxidase_su4_fam"/>
</dbReference>
<dbReference type="InterPro" id="IPR036639">
    <property type="entry name" value="Cyt_c_oxidase_su4_sf"/>
</dbReference>
<dbReference type="PANTHER" id="PTHR10707:SF12">
    <property type="entry name" value="CYTOCHROME C OXIDASE SUBUNIT 4 ISOFORM 1, MITOCHONDRIAL"/>
    <property type="match status" value="1"/>
</dbReference>
<dbReference type="PANTHER" id="PTHR10707">
    <property type="entry name" value="CYTOCHROME C OXIDASE SUBUNIT IV"/>
    <property type="match status" value="1"/>
</dbReference>
<dbReference type="Pfam" id="PF02936">
    <property type="entry name" value="COX4"/>
    <property type="match status" value="1"/>
</dbReference>
<dbReference type="PRINTS" id="PR01873">
    <property type="entry name" value="CYTCOXIDASE4"/>
</dbReference>
<dbReference type="SUPFAM" id="SSF81406">
    <property type="entry name" value="Mitochondrial cytochrome c oxidase subunit IV"/>
    <property type="match status" value="1"/>
</dbReference>
<accession>O46587</accession>
<keyword id="KW-0007">Acetylation</keyword>
<keyword id="KW-0472">Membrane</keyword>
<keyword id="KW-0496">Mitochondrion</keyword>
<keyword id="KW-0999">Mitochondrion inner membrane</keyword>
<keyword id="KW-0597">Phosphoprotein</keyword>
<keyword id="KW-0812">Transmembrane</keyword>
<keyword id="KW-1133">Transmembrane helix</keyword>
<name>COX41_MANSP</name>
<feature type="chain" id="PRO_0000194076" description="Cytochrome c oxidase subunit 4 isoform 1, mitochondrial">
    <location>
        <begin position="1" status="less than"/>
        <end position="99" status="greater than"/>
    </location>
</feature>
<feature type="topological domain" description="Mitochondrial matrix" evidence="1">
    <location>
        <begin position="1" status="less than"/>
        <end position="73"/>
    </location>
</feature>
<feature type="transmembrane region" description="Helical" evidence="1">
    <location>
        <begin position="74"/>
        <end position="99"/>
    </location>
</feature>
<feature type="modified residue" description="N6-acetyllysine; alternate" evidence="5">
    <location>
        <position position="4"/>
    </location>
</feature>
<feature type="modified residue" description="N6-succinyllysine; alternate" evidence="5">
    <location>
        <position position="4"/>
    </location>
</feature>
<feature type="modified residue" description="N6-acetyllysine" evidence="4">
    <location>
        <position position="28"/>
    </location>
</feature>
<feature type="modified residue" description="Phosphoserine" evidence="3">
    <location>
        <position position="31"/>
    </location>
</feature>
<feature type="modified residue" description="Phosphoserine" evidence="3">
    <location>
        <position position="33"/>
    </location>
</feature>
<feature type="modified residue" description="N6-acetyllysine; alternate" evidence="4">
    <location>
        <position position="35"/>
    </location>
</feature>
<feature type="modified residue" description="N6-succinyllysine; alternate" evidence="5">
    <location>
        <position position="35"/>
    </location>
</feature>
<feature type="modified residue" description="N6-acetyllysine" evidence="5">
    <location>
        <position position="42"/>
    </location>
</feature>
<feature type="non-terminal residue">
    <location>
        <position position="1"/>
    </location>
</feature>
<feature type="non-terminal residue">
    <location>
        <position position="99"/>
    </location>
</feature>
<proteinExistence type="inferred from homology"/>
<reference key="1">
    <citation type="journal article" date="1997" name="J. Mol. Evol.">
        <title>Molecular evolution of cytochrome c oxidase subunit IV: evidence for positive selection in simian primates.</title>
        <authorList>
            <person name="Wu W."/>
            <person name="Goodman M."/>
            <person name="Lomax M.I."/>
            <person name="Grossman L.I."/>
        </authorList>
    </citation>
    <scope>NUCLEOTIDE SEQUENCE [GENOMIC DNA]</scope>
</reference>
<protein>
    <recommendedName>
        <fullName>Cytochrome c oxidase subunit 4 isoform 1, mitochondrial</fullName>
    </recommendedName>
    <alternativeName>
        <fullName>Cytochrome c oxidase polypeptide IV</fullName>
    </alternativeName>
    <alternativeName>
        <fullName>Cytochrome c oxidase subunit IV isoform 1</fullName>
        <shortName>COX IV-1</shortName>
    </alternativeName>
</protein>